<feature type="transit peptide" description="Mitochondrion" evidence="3">
    <location>
        <begin position="1"/>
        <end position="23"/>
    </location>
</feature>
<feature type="chain" id="PRO_0000045288" description="Cytochrome c peroxidase, mitochondrial">
    <location>
        <begin position="24"/>
        <end position="357"/>
    </location>
</feature>
<feature type="region of interest" description="Disordered" evidence="6">
    <location>
        <begin position="189"/>
        <end position="212"/>
    </location>
</feature>
<feature type="active site" description="Proton acceptor" evidence="4 5">
    <location>
        <position position="116"/>
    </location>
</feature>
<feature type="active site" description="Tryptophan radical intermediate" evidence="1">
    <location>
        <position position="255"/>
    </location>
</feature>
<feature type="binding site" description="axial binding residue">
    <location>
        <position position="239"/>
    </location>
    <ligand>
        <name>heme b</name>
        <dbReference type="ChEBI" id="CHEBI:60344"/>
    </ligand>
    <ligandPart>
        <name>Fe</name>
        <dbReference type="ChEBI" id="CHEBI:18248"/>
    </ligandPart>
</feature>
<feature type="site" description="Transition state stabilizer" evidence="4">
    <location>
        <position position="112"/>
    </location>
</feature>
<name>CCPR_CANGA</name>
<organism>
    <name type="scientific">Candida glabrata (strain ATCC 2001 / BCRC 20586 / JCM 3761 / NBRC 0622 / NRRL Y-65 / CBS 138)</name>
    <name type="common">Yeast</name>
    <name type="synonym">Nakaseomyces glabratus</name>
    <dbReference type="NCBI Taxonomy" id="284593"/>
    <lineage>
        <taxon>Eukaryota</taxon>
        <taxon>Fungi</taxon>
        <taxon>Dikarya</taxon>
        <taxon>Ascomycota</taxon>
        <taxon>Saccharomycotina</taxon>
        <taxon>Saccharomycetes</taxon>
        <taxon>Saccharomycetales</taxon>
        <taxon>Saccharomycetaceae</taxon>
        <taxon>Nakaseomyces</taxon>
    </lineage>
</organism>
<sequence>MSATALRIAPIASRTFQRRLGYLLAGVATGAAATVAYKAQKNNNYYKYNNNNNNNSGFKAGALAAAAGVVHLAHEEDKKTADYQKVYNLIAERLRDDDEYDNYIGYGPVLVRLAWHSSGTWDKNDNTGGSYGGTYRYKKESQDPSNAGLENAAKFLEPVKKQFPWISYGDLYTLGGVVGIQELQGPKIPWRSGRTDLPEDMTPDNGRLPDGDKDANYVRNFYKRLDFNDREVVALLGAHALGKTHLKNSGFEGPWGAANNIFTNEFYLNLLNEDWKLEKNDAGNLQYNSPKGYMMLPTDYALIQDSNYLKIVKEYAADQDAFFRDFSKAFAALLERGIDFPKNQPVHIFKTLDEQGL</sequence>
<comment type="function">
    <text evidence="2">Destroys radicals which are normally produced within the cells and which are toxic to biological systems.</text>
</comment>
<comment type="catalytic activity">
    <reaction evidence="2">
        <text>2 Fe(II)-[cytochrome c] + H2O2 + 2 H(+) = 2 Fe(III)-[cytochrome c] + 2 H2O</text>
        <dbReference type="Rhea" id="RHEA:16581"/>
        <dbReference type="Rhea" id="RHEA-COMP:10350"/>
        <dbReference type="Rhea" id="RHEA-COMP:14399"/>
        <dbReference type="ChEBI" id="CHEBI:15377"/>
        <dbReference type="ChEBI" id="CHEBI:15378"/>
        <dbReference type="ChEBI" id="CHEBI:16240"/>
        <dbReference type="ChEBI" id="CHEBI:29033"/>
        <dbReference type="ChEBI" id="CHEBI:29034"/>
        <dbReference type="EC" id="1.11.1.5"/>
    </reaction>
</comment>
<comment type="cofactor">
    <cofactor evidence="4">
        <name>heme b</name>
        <dbReference type="ChEBI" id="CHEBI:60344"/>
    </cofactor>
    <text evidence="4">Binds 1 heme b (iron(II)-protoporphyrin IX) group per subunit.</text>
</comment>
<comment type="subunit">
    <text evidence="2">Forms a one-to-one complex with cytochrome c.</text>
</comment>
<comment type="subcellular location">
    <subcellularLocation>
        <location evidence="2">Mitochondrion matrix</location>
    </subcellularLocation>
    <subcellularLocation>
        <location evidence="2">Mitochondrion intermembrane space</location>
    </subcellularLocation>
</comment>
<comment type="similarity">
    <text evidence="7">Belongs to the peroxidase family. Cytochrome c peroxidase subfamily.</text>
</comment>
<accession>Q6FMG7</accession>
<keyword id="KW-0349">Heme</keyword>
<keyword id="KW-0408">Iron</keyword>
<keyword id="KW-0479">Metal-binding</keyword>
<keyword id="KW-0496">Mitochondrion</keyword>
<keyword id="KW-0560">Oxidoreductase</keyword>
<keyword id="KW-0575">Peroxidase</keyword>
<keyword id="KW-1185">Reference proteome</keyword>
<keyword id="KW-0809">Transit peptide</keyword>
<reference key="1">
    <citation type="journal article" date="2004" name="Nature">
        <title>Genome evolution in yeasts.</title>
        <authorList>
            <person name="Dujon B."/>
            <person name="Sherman D."/>
            <person name="Fischer G."/>
            <person name="Durrens P."/>
            <person name="Casaregola S."/>
            <person name="Lafontaine I."/>
            <person name="de Montigny J."/>
            <person name="Marck C."/>
            <person name="Neuveglise C."/>
            <person name="Talla E."/>
            <person name="Goffard N."/>
            <person name="Frangeul L."/>
            <person name="Aigle M."/>
            <person name="Anthouard V."/>
            <person name="Babour A."/>
            <person name="Barbe V."/>
            <person name="Barnay S."/>
            <person name="Blanchin S."/>
            <person name="Beckerich J.-M."/>
            <person name="Beyne E."/>
            <person name="Bleykasten C."/>
            <person name="Boisrame A."/>
            <person name="Boyer J."/>
            <person name="Cattolico L."/>
            <person name="Confanioleri F."/>
            <person name="de Daruvar A."/>
            <person name="Despons L."/>
            <person name="Fabre E."/>
            <person name="Fairhead C."/>
            <person name="Ferry-Dumazet H."/>
            <person name="Groppi A."/>
            <person name="Hantraye F."/>
            <person name="Hennequin C."/>
            <person name="Jauniaux N."/>
            <person name="Joyet P."/>
            <person name="Kachouri R."/>
            <person name="Kerrest A."/>
            <person name="Koszul R."/>
            <person name="Lemaire M."/>
            <person name="Lesur I."/>
            <person name="Ma L."/>
            <person name="Muller H."/>
            <person name="Nicaud J.-M."/>
            <person name="Nikolski M."/>
            <person name="Oztas S."/>
            <person name="Ozier-Kalogeropoulos O."/>
            <person name="Pellenz S."/>
            <person name="Potier S."/>
            <person name="Richard G.-F."/>
            <person name="Straub M.-L."/>
            <person name="Suleau A."/>
            <person name="Swennen D."/>
            <person name="Tekaia F."/>
            <person name="Wesolowski-Louvel M."/>
            <person name="Westhof E."/>
            <person name="Wirth B."/>
            <person name="Zeniou-Meyer M."/>
            <person name="Zivanovic Y."/>
            <person name="Bolotin-Fukuhara M."/>
            <person name="Thierry A."/>
            <person name="Bouchier C."/>
            <person name="Caudron B."/>
            <person name="Scarpelli C."/>
            <person name="Gaillardin C."/>
            <person name="Weissenbach J."/>
            <person name="Wincker P."/>
            <person name="Souciet J.-L."/>
        </authorList>
    </citation>
    <scope>NUCLEOTIDE SEQUENCE [LARGE SCALE GENOMIC DNA]</scope>
    <source>
        <strain>ATCC 2001 / BCRC 20586 / JCM 3761 / NBRC 0622 / NRRL Y-65 / CBS 138</strain>
    </source>
</reference>
<evidence type="ECO:0000250" key="1"/>
<evidence type="ECO:0000250" key="2">
    <source>
        <dbReference type="UniProtKB" id="P00431"/>
    </source>
</evidence>
<evidence type="ECO:0000255" key="3"/>
<evidence type="ECO:0000255" key="4">
    <source>
        <dbReference type="PROSITE-ProRule" id="PRU00297"/>
    </source>
</evidence>
<evidence type="ECO:0000255" key="5">
    <source>
        <dbReference type="PROSITE-ProRule" id="PRU10012"/>
    </source>
</evidence>
<evidence type="ECO:0000256" key="6">
    <source>
        <dbReference type="SAM" id="MobiDB-lite"/>
    </source>
</evidence>
<evidence type="ECO:0000305" key="7"/>
<gene>
    <name type="ordered locus">CAGL0K08184g</name>
</gene>
<dbReference type="EC" id="1.11.1.5" evidence="2"/>
<dbReference type="EMBL" id="CR380957">
    <property type="protein sequence ID" value="CAG61540.1"/>
    <property type="molecule type" value="Genomic_DNA"/>
</dbReference>
<dbReference type="SMR" id="Q6FMG7"/>
<dbReference type="FunCoup" id="Q6FMG7">
    <property type="interactions" value="86"/>
</dbReference>
<dbReference type="STRING" id="284593.Q6FMG7"/>
<dbReference type="PeroxiBase" id="2366">
    <property type="entry name" value="CglCcP01"/>
</dbReference>
<dbReference type="EnsemblFungi" id="CAGL0K08184g-T">
    <property type="protein sequence ID" value="CAGL0K08184g-T-p1"/>
    <property type="gene ID" value="CAGL0K08184g"/>
</dbReference>
<dbReference type="KEGG" id="cgr:2890345"/>
<dbReference type="CGD" id="CAL0134567">
    <property type="gene designation" value="CCP1"/>
</dbReference>
<dbReference type="VEuPathDB" id="FungiDB:B1J91_K08184g"/>
<dbReference type="VEuPathDB" id="FungiDB:CAGL0K08184g"/>
<dbReference type="eggNOG" id="ENOG502QR1E">
    <property type="taxonomic scope" value="Eukaryota"/>
</dbReference>
<dbReference type="HOGENOM" id="CLU_036959_1_1_1"/>
<dbReference type="InParanoid" id="Q6FMG7"/>
<dbReference type="OMA" id="QRKWNGP"/>
<dbReference type="Proteomes" id="UP000002428">
    <property type="component" value="Chromosome K"/>
</dbReference>
<dbReference type="GO" id="GO:0005829">
    <property type="term" value="C:cytosol"/>
    <property type="evidence" value="ECO:0000314"/>
    <property type="project" value="CGD"/>
</dbReference>
<dbReference type="GO" id="GO:0005758">
    <property type="term" value="C:mitochondrial intermembrane space"/>
    <property type="evidence" value="ECO:0007669"/>
    <property type="project" value="UniProtKB-SubCell"/>
</dbReference>
<dbReference type="GO" id="GO:0005759">
    <property type="term" value="C:mitochondrial matrix"/>
    <property type="evidence" value="ECO:0007669"/>
    <property type="project" value="UniProtKB-SubCell"/>
</dbReference>
<dbReference type="GO" id="GO:0004130">
    <property type="term" value="F:cytochrome-c peroxidase activity"/>
    <property type="evidence" value="ECO:0007669"/>
    <property type="project" value="UniProtKB-EC"/>
</dbReference>
<dbReference type="GO" id="GO:0020037">
    <property type="term" value="F:heme binding"/>
    <property type="evidence" value="ECO:0007669"/>
    <property type="project" value="InterPro"/>
</dbReference>
<dbReference type="GO" id="GO:0046872">
    <property type="term" value="F:metal ion binding"/>
    <property type="evidence" value="ECO:0007669"/>
    <property type="project" value="UniProtKB-KW"/>
</dbReference>
<dbReference type="GO" id="GO:0034599">
    <property type="term" value="P:cellular response to oxidative stress"/>
    <property type="evidence" value="ECO:0007669"/>
    <property type="project" value="EnsemblFungi"/>
</dbReference>
<dbReference type="GO" id="GO:0042744">
    <property type="term" value="P:hydrogen peroxide catabolic process"/>
    <property type="evidence" value="ECO:0007669"/>
    <property type="project" value="TreeGrafter"/>
</dbReference>
<dbReference type="GO" id="GO:0000302">
    <property type="term" value="P:response to reactive oxygen species"/>
    <property type="evidence" value="ECO:0007669"/>
    <property type="project" value="TreeGrafter"/>
</dbReference>
<dbReference type="FunFam" id="1.10.520.10:FF:000005">
    <property type="entry name" value="Cytochrome c peroxidase"/>
    <property type="match status" value="1"/>
</dbReference>
<dbReference type="Gene3D" id="1.10.520.10">
    <property type="match status" value="1"/>
</dbReference>
<dbReference type="Gene3D" id="1.10.420.10">
    <property type="entry name" value="Peroxidase, domain 2"/>
    <property type="match status" value="1"/>
</dbReference>
<dbReference type="InterPro" id="IPR044831">
    <property type="entry name" value="Ccp1-like"/>
</dbReference>
<dbReference type="InterPro" id="IPR002016">
    <property type="entry name" value="Haem_peroxidase"/>
</dbReference>
<dbReference type="InterPro" id="IPR010255">
    <property type="entry name" value="Haem_peroxidase_sf"/>
</dbReference>
<dbReference type="InterPro" id="IPR002207">
    <property type="entry name" value="Peroxidase_I"/>
</dbReference>
<dbReference type="InterPro" id="IPR019794">
    <property type="entry name" value="Peroxidases_AS"/>
</dbReference>
<dbReference type="InterPro" id="IPR019793">
    <property type="entry name" value="Peroxidases_heam-ligand_BS"/>
</dbReference>
<dbReference type="PANTHER" id="PTHR31356:SF58">
    <property type="entry name" value="CYTOCHROME C PEROXIDASE, MITOCHONDRIAL"/>
    <property type="match status" value="1"/>
</dbReference>
<dbReference type="PANTHER" id="PTHR31356">
    <property type="entry name" value="THYLAKOID LUMENAL 29 KDA PROTEIN, CHLOROPLASTIC-RELATED"/>
    <property type="match status" value="1"/>
</dbReference>
<dbReference type="Pfam" id="PF00141">
    <property type="entry name" value="peroxidase"/>
    <property type="match status" value="1"/>
</dbReference>
<dbReference type="PRINTS" id="PR00459">
    <property type="entry name" value="ASPEROXIDASE"/>
</dbReference>
<dbReference type="PRINTS" id="PR00458">
    <property type="entry name" value="PEROXIDASE"/>
</dbReference>
<dbReference type="SUPFAM" id="SSF48113">
    <property type="entry name" value="Heme-dependent peroxidases"/>
    <property type="match status" value="1"/>
</dbReference>
<dbReference type="PROSITE" id="PS00435">
    <property type="entry name" value="PEROXIDASE_1"/>
    <property type="match status" value="1"/>
</dbReference>
<dbReference type="PROSITE" id="PS00436">
    <property type="entry name" value="PEROXIDASE_2"/>
    <property type="match status" value="1"/>
</dbReference>
<dbReference type="PROSITE" id="PS50873">
    <property type="entry name" value="PEROXIDASE_4"/>
    <property type="match status" value="1"/>
</dbReference>
<proteinExistence type="inferred from homology"/>
<protein>
    <recommendedName>
        <fullName>Cytochrome c peroxidase, mitochondrial</fullName>
        <shortName>CCP</shortName>
        <ecNumber evidence="2">1.11.1.5</ecNumber>
    </recommendedName>
</protein>